<protein>
    <recommendedName>
        <fullName evidence="1">Novel acetylcholine receptor chaperone</fullName>
    </recommendedName>
    <alternativeName>
        <fullName>Transmembrane protein 35A</fullName>
    </alternativeName>
</protein>
<accession>Q5E9T5</accession>
<accession>Q5EAA9</accession>
<organism>
    <name type="scientific">Bos taurus</name>
    <name type="common">Bovine</name>
    <dbReference type="NCBI Taxonomy" id="9913"/>
    <lineage>
        <taxon>Eukaryota</taxon>
        <taxon>Metazoa</taxon>
        <taxon>Chordata</taxon>
        <taxon>Craniata</taxon>
        <taxon>Vertebrata</taxon>
        <taxon>Euteleostomi</taxon>
        <taxon>Mammalia</taxon>
        <taxon>Eutheria</taxon>
        <taxon>Laurasiatheria</taxon>
        <taxon>Artiodactyla</taxon>
        <taxon>Ruminantia</taxon>
        <taxon>Pecora</taxon>
        <taxon>Bovidae</taxon>
        <taxon>Bovinae</taxon>
        <taxon>Bos</taxon>
    </lineage>
</organism>
<reference key="1">
    <citation type="journal article" date="2005" name="BMC Genomics">
        <title>Characterization of 954 bovine full-CDS cDNA sequences.</title>
        <authorList>
            <person name="Harhay G.P."/>
            <person name="Sonstegard T.S."/>
            <person name="Keele J.W."/>
            <person name="Heaton M.P."/>
            <person name="Clawson M.L."/>
            <person name="Snelling W.M."/>
            <person name="Wiedmann R.T."/>
            <person name="Van Tassell C.P."/>
            <person name="Smith T.P.L."/>
        </authorList>
    </citation>
    <scope>NUCLEOTIDE SEQUENCE [LARGE SCALE MRNA]</scope>
</reference>
<reference key="2">
    <citation type="submission" date="2006-08" db="EMBL/GenBank/DDBJ databases">
        <authorList>
            <consortium name="NIH - Mammalian Gene Collection (MGC) project"/>
        </authorList>
    </citation>
    <scope>NUCLEOTIDE SEQUENCE [LARGE SCALE MRNA]</scope>
    <source>
        <strain>Hereford</strain>
        <tissue>Basal ganglia</tissue>
    </source>
</reference>
<comment type="function">
    <text evidence="1 3">Molecular chaperone which mediates the proper assembly and functional expression of the nicotinic acetylcholine receptors (nAChRs) throughout the brain (By similarity). Essential for the proper folding, assembly, function and surface trafficking of alpha-7 (CHRNA7), alpha-4-beta-2, alpha-3-beta-2 and alpha-3-beta-4 receptors (By similarity). Stably associates with ribophorin-1 (RPN1) and ribophorin-2 (RPN2) (components of the oligosaccharyl transferase (OST) complex) and with calnexin (CANX), both of which are critical for NACHO-mediated effects on CHRNA7 assembly and function (By similarity). Facilitates the proper folding and assembly of alpha-6-beta-2 and alpha-6-beta-2-beta-3 receptors and acts at early stages of the nAChRs subunit assembly (By similarity). Promotes the expression of the alpha-4(2):beta-2(3) stoichiometric form over the alpha-4(3):beta-2(2) form (By similarity).</text>
</comment>
<comment type="subunit">
    <text evidence="2 3">May interact with NGFR (By similarity). Interacts with RPN1, RPN2 and CANX (By similarity).</text>
</comment>
<comment type="subcellular location">
    <subcellularLocation>
        <location evidence="3">Peroxisome membrane</location>
        <topology evidence="4">Multi-pass membrane protein</topology>
    </subcellularLocation>
    <subcellularLocation>
        <location evidence="2">Cytoplasmic vesicle</location>
    </subcellularLocation>
    <subcellularLocation>
        <location evidence="3">Endoplasmic reticulum membrane</location>
        <topology evidence="4">Multi-pass membrane protein</topology>
    </subcellularLocation>
    <text evidence="2">Shedding may lead to a soluble peptide.</text>
</comment>
<comment type="similarity">
    <text evidence="6">Belongs to the DoxX family.</text>
</comment>
<gene>
    <name type="primary">TMEM35A</name>
    <name evidence="1" type="synonym">NACHO</name>
    <name type="synonym">TMEM35</name>
</gene>
<sequence>MASPRTVTVVALSVALGLFFVFMGTIKLTPRLSKDAYSEMKRAYKSYVRALPLLKKMGINSILLRKSIGALEVACGIVMTLVPGRPKDVANFFLLLLVLAVLFFHQLVGDPLKRYAHALVFGILLTCRLLIARKPEDRSSEKKSSPPGNAGSDGNAGNTEEQPSLYEKAPQGKMKLS</sequence>
<name>NACHO_BOVIN</name>
<evidence type="ECO:0000250" key="1">
    <source>
        <dbReference type="UniProtKB" id="Q53FP2"/>
    </source>
</evidence>
<evidence type="ECO:0000250" key="2">
    <source>
        <dbReference type="UniProtKB" id="Q6JAM9"/>
    </source>
</evidence>
<evidence type="ECO:0000250" key="3">
    <source>
        <dbReference type="UniProtKB" id="Q9D328"/>
    </source>
</evidence>
<evidence type="ECO:0000255" key="4"/>
<evidence type="ECO:0000256" key="5">
    <source>
        <dbReference type="SAM" id="MobiDB-lite"/>
    </source>
</evidence>
<evidence type="ECO:0000305" key="6"/>
<dbReference type="EMBL" id="BT020660">
    <property type="protein sequence ID" value="AAX08677.1"/>
    <property type="molecule type" value="mRNA"/>
</dbReference>
<dbReference type="EMBL" id="BT020835">
    <property type="protein sequence ID" value="AAX08852.1"/>
    <property type="molecule type" value="mRNA"/>
</dbReference>
<dbReference type="EMBL" id="BC122649">
    <property type="protein sequence ID" value="AAI22650.1"/>
    <property type="molecule type" value="mRNA"/>
</dbReference>
<dbReference type="RefSeq" id="NP_001014940.1">
    <property type="nucleotide sequence ID" value="NM_001014940.1"/>
</dbReference>
<dbReference type="SMR" id="Q5E9T5"/>
<dbReference type="FunCoup" id="Q5E9T5">
    <property type="interactions" value="1092"/>
</dbReference>
<dbReference type="STRING" id="9913.ENSBTAP00000028319"/>
<dbReference type="PaxDb" id="9913-ENSBTAP00000028319"/>
<dbReference type="Ensembl" id="ENSBTAT00000028319.5">
    <property type="protein sequence ID" value="ENSBTAP00000028319.3"/>
    <property type="gene ID" value="ENSBTAG00000021252.7"/>
</dbReference>
<dbReference type="GeneID" id="533337"/>
<dbReference type="KEGG" id="bta:533337"/>
<dbReference type="CTD" id="59353"/>
<dbReference type="VEuPathDB" id="HostDB:ENSBTAG00000021252"/>
<dbReference type="VGNC" id="VGNC:36077">
    <property type="gene designation" value="TMEM35A"/>
</dbReference>
<dbReference type="eggNOG" id="ENOG502RXPR">
    <property type="taxonomic scope" value="Eukaryota"/>
</dbReference>
<dbReference type="GeneTree" id="ENSGT00940000154325"/>
<dbReference type="HOGENOM" id="CLU_121618_0_0_1"/>
<dbReference type="InParanoid" id="Q5E9T5"/>
<dbReference type="OMA" id="YQTSRRE"/>
<dbReference type="OrthoDB" id="432685at2759"/>
<dbReference type="TreeFam" id="TF300206"/>
<dbReference type="Proteomes" id="UP000009136">
    <property type="component" value="Chromosome X"/>
</dbReference>
<dbReference type="Bgee" id="ENSBTAG00000021252">
    <property type="expression patterns" value="Expressed in Ammon's horn and 95 other cell types or tissues"/>
</dbReference>
<dbReference type="GO" id="GO:0031410">
    <property type="term" value="C:cytoplasmic vesicle"/>
    <property type="evidence" value="ECO:0007669"/>
    <property type="project" value="UniProtKB-KW"/>
</dbReference>
<dbReference type="GO" id="GO:0005783">
    <property type="term" value="C:endoplasmic reticulum"/>
    <property type="evidence" value="ECO:0000250"/>
    <property type="project" value="UniProtKB"/>
</dbReference>
<dbReference type="GO" id="GO:0005789">
    <property type="term" value="C:endoplasmic reticulum membrane"/>
    <property type="evidence" value="ECO:0007669"/>
    <property type="project" value="UniProtKB-SubCell"/>
</dbReference>
<dbReference type="GO" id="GO:0005778">
    <property type="term" value="C:peroxisomal membrane"/>
    <property type="evidence" value="ECO:0007669"/>
    <property type="project" value="UniProtKB-SubCell"/>
</dbReference>
<dbReference type="GO" id="GO:0030548">
    <property type="term" value="F:acetylcholine receptor regulator activity"/>
    <property type="evidence" value="ECO:0000318"/>
    <property type="project" value="GO_Central"/>
</dbReference>
<dbReference type="GO" id="GO:0051131">
    <property type="term" value="P:chaperone-mediated protein complex assembly"/>
    <property type="evidence" value="ECO:0000250"/>
    <property type="project" value="UniProtKB"/>
</dbReference>
<dbReference type="GO" id="GO:2000010">
    <property type="term" value="P:positive regulation of protein localization to cell surface"/>
    <property type="evidence" value="ECO:0000250"/>
    <property type="project" value="UniProtKB"/>
</dbReference>
<dbReference type="InterPro" id="IPR040399">
    <property type="entry name" value="TMEM35A/B"/>
</dbReference>
<dbReference type="PANTHER" id="PTHR13163:SF0">
    <property type="entry name" value="NOVEL ACETYLCHOLINE RECEPTOR CHAPERONE"/>
    <property type="match status" value="1"/>
</dbReference>
<dbReference type="PANTHER" id="PTHR13163">
    <property type="entry name" value="SPINAL CORD EXPRESSION PROTEIN 4"/>
    <property type="match status" value="1"/>
</dbReference>
<keyword id="KW-0143">Chaperone</keyword>
<keyword id="KW-0968">Cytoplasmic vesicle</keyword>
<keyword id="KW-0256">Endoplasmic reticulum</keyword>
<keyword id="KW-0472">Membrane</keyword>
<keyword id="KW-0576">Peroxisome</keyword>
<keyword id="KW-1185">Reference proteome</keyword>
<keyword id="KW-0812">Transmembrane</keyword>
<keyword id="KW-1133">Transmembrane helix</keyword>
<proteinExistence type="evidence at transcript level"/>
<feature type="chain" id="PRO_0000271606" description="Novel acetylcholine receptor chaperone">
    <location>
        <begin position="1"/>
        <end position="177"/>
    </location>
</feature>
<feature type="topological domain" description="Cytoplasmic" evidence="6">
    <location>
        <begin position="1"/>
        <end position="5"/>
    </location>
</feature>
<feature type="transmembrane region" description="Helical; Name=1" evidence="4">
    <location>
        <begin position="6"/>
        <end position="26"/>
    </location>
</feature>
<feature type="topological domain" description="Lumenal" evidence="6">
    <location>
        <begin position="27"/>
        <end position="61"/>
    </location>
</feature>
<feature type="transmembrane region" description="Helical; Name=2" evidence="4">
    <location>
        <begin position="62"/>
        <end position="82"/>
    </location>
</feature>
<feature type="topological domain" description="Cytoplasmic" evidence="6">
    <location>
        <begin position="83"/>
        <end position="88"/>
    </location>
</feature>
<feature type="transmembrane region" description="Helical; Name=3" evidence="4">
    <location>
        <begin position="89"/>
        <end position="109"/>
    </location>
</feature>
<feature type="topological domain" description="Lumenal" evidence="6">
    <location>
        <begin position="110"/>
        <end position="114"/>
    </location>
</feature>
<feature type="transmembrane region" description="Helical; Name=4" evidence="4">
    <location>
        <begin position="115"/>
        <end position="132"/>
    </location>
</feature>
<feature type="topological domain" description="Cytoplasmic" evidence="6">
    <location>
        <begin position="133"/>
        <end position="177"/>
    </location>
</feature>
<feature type="region of interest" description="Interaction with NGFR" evidence="2">
    <location>
        <begin position="43"/>
        <end position="54"/>
    </location>
</feature>
<feature type="region of interest" description="Disordered" evidence="5">
    <location>
        <begin position="136"/>
        <end position="177"/>
    </location>
</feature>
<feature type="sequence conflict" description="In Ref. 1; AAX08677." evidence="6" ref="1">
    <original>R</original>
    <variation>I</variation>
    <location>
        <position position="5"/>
    </location>
</feature>